<gene>
    <name type="ordered locus">At1g80150</name>
    <name type="ORF">F18B13.23</name>
</gene>
<accession>Q8GW57</accession>
<accession>Q9SSC4</accession>
<reference key="1">
    <citation type="journal article" date="2000" name="Nature">
        <title>Sequence and analysis of chromosome 1 of the plant Arabidopsis thaliana.</title>
        <authorList>
            <person name="Theologis A."/>
            <person name="Ecker J.R."/>
            <person name="Palm C.J."/>
            <person name="Federspiel N.A."/>
            <person name="Kaul S."/>
            <person name="White O."/>
            <person name="Alonso J."/>
            <person name="Altafi H."/>
            <person name="Araujo R."/>
            <person name="Bowman C.L."/>
            <person name="Brooks S.Y."/>
            <person name="Buehler E."/>
            <person name="Chan A."/>
            <person name="Chao Q."/>
            <person name="Chen H."/>
            <person name="Cheuk R.F."/>
            <person name="Chin C.W."/>
            <person name="Chung M.K."/>
            <person name="Conn L."/>
            <person name="Conway A.B."/>
            <person name="Conway A.R."/>
            <person name="Creasy T.H."/>
            <person name="Dewar K."/>
            <person name="Dunn P."/>
            <person name="Etgu P."/>
            <person name="Feldblyum T.V."/>
            <person name="Feng J.-D."/>
            <person name="Fong B."/>
            <person name="Fujii C.Y."/>
            <person name="Gill J.E."/>
            <person name="Goldsmith A.D."/>
            <person name="Haas B."/>
            <person name="Hansen N.F."/>
            <person name="Hughes B."/>
            <person name="Huizar L."/>
            <person name="Hunter J.L."/>
            <person name="Jenkins J."/>
            <person name="Johnson-Hopson C."/>
            <person name="Khan S."/>
            <person name="Khaykin E."/>
            <person name="Kim C.J."/>
            <person name="Koo H.L."/>
            <person name="Kremenetskaia I."/>
            <person name="Kurtz D.B."/>
            <person name="Kwan A."/>
            <person name="Lam B."/>
            <person name="Langin-Hooper S."/>
            <person name="Lee A."/>
            <person name="Lee J.M."/>
            <person name="Lenz C.A."/>
            <person name="Li J.H."/>
            <person name="Li Y.-P."/>
            <person name="Lin X."/>
            <person name="Liu S.X."/>
            <person name="Liu Z.A."/>
            <person name="Luros J.S."/>
            <person name="Maiti R."/>
            <person name="Marziali A."/>
            <person name="Militscher J."/>
            <person name="Miranda M."/>
            <person name="Nguyen M."/>
            <person name="Nierman W.C."/>
            <person name="Osborne B.I."/>
            <person name="Pai G."/>
            <person name="Peterson J."/>
            <person name="Pham P.K."/>
            <person name="Rizzo M."/>
            <person name="Rooney T."/>
            <person name="Rowley D."/>
            <person name="Sakano H."/>
            <person name="Salzberg S.L."/>
            <person name="Schwartz J.R."/>
            <person name="Shinn P."/>
            <person name="Southwick A.M."/>
            <person name="Sun H."/>
            <person name="Tallon L.J."/>
            <person name="Tambunga G."/>
            <person name="Toriumi M.J."/>
            <person name="Town C.D."/>
            <person name="Utterback T."/>
            <person name="Van Aken S."/>
            <person name="Vaysberg M."/>
            <person name="Vysotskaia V.S."/>
            <person name="Walker M."/>
            <person name="Wu D."/>
            <person name="Yu G."/>
            <person name="Fraser C.M."/>
            <person name="Venter J.C."/>
            <person name="Davis R.W."/>
        </authorList>
    </citation>
    <scope>NUCLEOTIDE SEQUENCE [LARGE SCALE GENOMIC DNA]</scope>
    <source>
        <strain>cv. Columbia</strain>
    </source>
</reference>
<reference key="2">
    <citation type="journal article" date="2017" name="Plant J.">
        <title>Araport11: a complete reannotation of the Arabidopsis thaliana reference genome.</title>
        <authorList>
            <person name="Cheng C.Y."/>
            <person name="Krishnakumar V."/>
            <person name="Chan A.P."/>
            <person name="Thibaud-Nissen F."/>
            <person name="Schobel S."/>
            <person name="Town C.D."/>
        </authorList>
    </citation>
    <scope>GENOME REANNOTATION</scope>
    <source>
        <strain>cv. Columbia</strain>
    </source>
</reference>
<reference key="3">
    <citation type="journal article" date="2002" name="Science">
        <title>Functional annotation of a full-length Arabidopsis cDNA collection.</title>
        <authorList>
            <person name="Seki M."/>
            <person name="Narusaka M."/>
            <person name="Kamiya A."/>
            <person name="Ishida J."/>
            <person name="Satou M."/>
            <person name="Sakurai T."/>
            <person name="Nakajima M."/>
            <person name="Enju A."/>
            <person name="Akiyama K."/>
            <person name="Oono Y."/>
            <person name="Muramatsu M."/>
            <person name="Hayashizaki Y."/>
            <person name="Kawai J."/>
            <person name="Carninci P."/>
            <person name="Itoh M."/>
            <person name="Ishii Y."/>
            <person name="Arakawa T."/>
            <person name="Shibata K."/>
            <person name="Shinagawa A."/>
            <person name="Shinozaki K."/>
        </authorList>
    </citation>
    <scope>NUCLEOTIDE SEQUENCE [LARGE SCALE MRNA]</scope>
    <source>
        <strain>cv. Columbia</strain>
    </source>
</reference>
<reference key="4">
    <citation type="journal article" date="2003" name="Science">
        <title>Empirical analysis of transcriptional activity in the Arabidopsis genome.</title>
        <authorList>
            <person name="Yamada K."/>
            <person name="Lim J."/>
            <person name="Dale J.M."/>
            <person name="Chen H."/>
            <person name="Shinn P."/>
            <person name="Palm C.J."/>
            <person name="Southwick A.M."/>
            <person name="Wu H.C."/>
            <person name="Kim C.J."/>
            <person name="Nguyen M."/>
            <person name="Pham P.K."/>
            <person name="Cheuk R.F."/>
            <person name="Karlin-Newmann G."/>
            <person name="Liu S.X."/>
            <person name="Lam B."/>
            <person name="Sakano H."/>
            <person name="Wu T."/>
            <person name="Yu G."/>
            <person name="Miranda M."/>
            <person name="Quach H.L."/>
            <person name="Tripp M."/>
            <person name="Chang C.H."/>
            <person name="Lee J.M."/>
            <person name="Toriumi M.J."/>
            <person name="Chan M.M."/>
            <person name="Tang C.C."/>
            <person name="Onodera C.S."/>
            <person name="Deng J.M."/>
            <person name="Akiyama K."/>
            <person name="Ansari Y."/>
            <person name="Arakawa T."/>
            <person name="Banh J."/>
            <person name="Banno F."/>
            <person name="Bowser L."/>
            <person name="Brooks S.Y."/>
            <person name="Carninci P."/>
            <person name="Chao Q."/>
            <person name="Choy N."/>
            <person name="Enju A."/>
            <person name="Goldsmith A.D."/>
            <person name="Gurjal M."/>
            <person name="Hansen N.F."/>
            <person name="Hayashizaki Y."/>
            <person name="Johnson-Hopson C."/>
            <person name="Hsuan V.W."/>
            <person name="Iida K."/>
            <person name="Karnes M."/>
            <person name="Khan S."/>
            <person name="Koesema E."/>
            <person name="Ishida J."/>
            <person name="Jiang P.X."/>
            <person name="Jones T."/>
            <person name="Kawai J."/>
            <person name="Kamiya A."/>
            <person name="Meyers C."/>
            <person name="Nakajima M."/>
            <person name="Narusaka M."/>
            <person name="Seki M."/>
            <person name="Sakurai T."/>
            <person name="Satou M."/>
            <person name="Tamse R."/>
            <person name="Vaysberg M."/>
            <person name="Wallender E.K."/>
            <person name="Wong C."/>
            <person name="Yamamura Y."/>
            <person name="Yuan S."/>
            <person name="Shinozaki K."/>
            <person name="Davis R.W."/>
            <person name="Theologis A."/>
            <person name="Ecker J.R."/>
        </authorList>
    </citation>
    <scope>NUCLEOTIDE SEQUENCE [LARGE SCALE MRNA]</scope>
    <source>
        <strain>cv. Columbia</strain>
    </source>
</reference>
<reference key="5">
    <citation type="journal article" date="2004" name="Plant Cell">
        <title>Genome-wide analysis of Arabidopsis pentatricopeptide repeat proteins reveals their essential role in organelle biogenesis.</title>
        <authorList>
            <person name="Lurin C."/>
            <person name="Andres C."/>
            <person name="Aubourg S."/>
            <person name="Bellaoui M."/>
            <person name="Bitton F."/>
            <person name="Bruyere C."/>
            <person name="Caboche M."/>
            <person name="Debast C."/>
            <person name="Gualberto J."/>
            <person name="Hoffmann B."/>
            <person name="Lecharny A."/>
            <person name="Le Ret M."/>
            <person name="Martin-Magniette M.-L."/>
            <person name="Mireau H."/>
            <person name="Peeters N."/>
            <person name="Renou J.-P."/>
            <person name="Szurek B."/>
            <person name="Taconnat L."/>
            <person name="Small I."/>
        </authorList>
    </citation>
    <scope>GENE FAMILY</scope>
</reference>
<protein>
    <recommendedName>
        <fullName>Pentatricopeptide repeat-containing protein At1g80150, mitochondrial</fullName>
    </recommendedName>
</protein>
<keyword id="KW-0496">Mitochondrion</keyword>
<keyword id="KW-1185">Reference proteome</keyword>
<keyword id="KW-0677">Repeat</keyword>
<keyword id="KW-0809">Transit peptide</keyword>
<organism>
    <name type="scientific">Arabidopsis thaliana</name>
    <name type="common">Mouse-ear cress</name>
    <dbReference type="NCBI Taxonomy" id="3702"/>
    <lineage>
        <taxon>Eukaryota</taxon>
        <taxon>Viridiplantae</taxon>
        <taxon>Streptophyta</taxon>
        <taxon>Embryophyta</taxon>
        <taxon>Tracheophyta</taxon>
        <taxon>Spermatophyta</taxon>
        <taxon>Magnoliopsida</taxon>
        <taxon>eudicotyledons</taxon>
        <taxon>Gunneridae</taxon>
        <taxon>Pentapetalae</taxon>
        <taxon>rosids</taxon>
        <taxon>malvids</taxon>
        <taxon>Brassicales</taxon>
        <taxon>Brassicaceae</taxon>
        <taxon>Camelineae</taxon>
        <taxon>Arabidopsis</taxon>
    </lineage>
</organism>
<dbReference type="EMBL" id="AC009322">
    <property type="protein sequence ID" value="AAD55488.1"/>
    <property type="status" value="ALT_SEQ"/>
    <property type="molecule type" value="Genomic_DNA"/>
</dbReference>
<dbReference type="EMBL" id="CP002684">
    <property type="protein sequence ID" value="AEE36363.1"/>
    <property type="molecule type" value="Genomic_DNA"/>
</dbReference>
<dbReference type="EMBL" id="AK119070">
    <property type="protein sequence ID" value="BAC43646.1"/>
    <property type="molecule type" value="mRNA"/>
</dbReference>
<dbReference type="EMBL" id="BT005353">
    <property type="protein sequence ID" value="AAO63417.1"/>
    <property type="molecule type" value="mRNA"/>
</dbReference>
<dbReference type="PIR" id="B96833">
    <property type="entry name" value="B96833"/>
</dbReference>
<dbReference type="RefSeq" id="NP_178132.1">
    <property type="nucleotide sequence ID" value="NM_106664.4"/>
</dbReference>
<dbReference type="SMR" id="Q8GW57"/>
<dbReference type="BioGRID" id="29573">
    <property type="interactions" value="1"/>
</dbReference>
<dbReference type="FunCoup" id="Q8GW57">
    <property type="interactions" value="40"/>
</dbReference>
<dbReference type="IntAct" id="Q8GW57">
    <property type="interactions" value="1"/>
</dbReference>
<dbReference type="STRING" id="3702.Q8GW57"/>
<dbReference type="iPTMnet" id="Q8GW57"/>
<dbReference type="PaxDb" id="3702-AT1G80150.1"/>
<dbReference type="ProteomicsDB" id="249410"/>
<dbReference type="EnsemblPlants" id="AT1G80150.1">
    <property type="protein sequence ID" value="AT1G80150.1"/>
    <property type="gene ID" value="AT1G80150"/>
</dbReference>
<dbReference type="GeneID" id="844355"/>
<dbReference type="Gramene" id="AT1G80150.1">
    <property type="protein sequence ID" value="AT1G80150.1"/>
    <property type="gene ID" value="AT1G80150"/>
</dbReference>
<dbReference type="KEGG" id="ath:AT1G80150"/>
<dbReference type="Araport" id="AT1G80150"/>
<dbReference type="TAIR" id="AT1G80150"/>
<dbReference type="eggNOG" id="KOG4197">
    <property type="taxonomic scope" value="Eukaryota"/>
</dbReference>
<dbReference type="HOGENOM" id="CLU_002706_10_3_1"/>
<dbReference type="InParanoid" id="Q8GW57"/>
<dbReference type="OMA" id="MAYTMCK"/>
<dbReference type="OrthoDB" id="185373at2759"/>
<dbReference type="PhylomeDB" id="Q8GW57"/>
<dbReference type="PRO" id="PR:Q8GW57"/>
<dbReference type="Proteomes" id="UP000006548">
    <property type="component" value="Chromosome 1"/>
</dbReference>
<dbReference type="ExpressionAtlas" id="Q8GW57">
    <property type="expression patterns" value="baseline and differential"/>
</dbReference>
<dbReference type="GO" id="GO:0005739">
    <property type="term" value="C:mitochondrion"/>
    <property type="evidence" value="ECO:0007669"/>
    <property type="project" value="UniProtKB-SubCell"/>
</dbReference>
<dbReference type="Gene3D" id="1.25.40.10">
    <property type="entry name" value="Tetratricopeptide repeat domain"/>
    <property type="match status" value="2"/>
</dbReference>
<dbReference type="InterPro" id="IPR002885">
    <property type="entry name" value="Pentatricopeptide_rpt"/>
</dbReference>
<dbReference type="InterPro" id="IPR050667">
    <property type="entry name" value="PPR-containing_protein"/>
</dbReference>
<dbReference type="InterPro" id="IPR011990">
    <property type="entry name" value="TPR-like_helical_dom_sf"/>
</dbReference>
<dbReference type="NCBIfam" id="TIGR00756">
    <property type="entry name" value="PPR"/>
    <property type="match status" value="4"/>
</dbReference>
<dbReference type="PANTHER" id="PTHR47939">
    <property type="entry name" value="MEMBRANE-ASSOCIATED SALT-INDUCIBLE PROTEIN-LIKE"/>
    <property type="match status" value="1"/>
</dbReference>
<dbReference type="PANTHER" id="PTHR47939:SF7">
    <property type="entry name" value="REPEAT-CONTAINING PROTEIN, PUTATIVE-RELATED"/>
    <property type="match status" value="1"/>
</dbReference>
<dbReference type="Pfam" id="PF01535">
    <property type="entry name" value="PPR"/>
    <property type="match status" value="1"/>
</dbReference>
<dbReference type="Pfam" id="PF12854">
    <property type="entry name" value="PPR_1"/>
    <property type="match status" value="1"/>
</dbReference>
<dbReference type="Pfam" id="PF13041">
    <property type="entry name" value="PPR_2"/>
    <property type="match status" value="1"/>
</dbReference>
<dbReference type="PROSITE" id="PS51375">
    <property type="entry name" value="PPR"/>
    <property type="match status" value="7"/>
</dbReference>
<name>PP134_ARATH</name>
<proteinExistence type="evidence at transcript level"/>
<sequence length="397" mass="45506">MLSLRHIRRFCHFPSSAATGIAYVSTESNQIQGLKPLEEPALVKLKSERDPEKLYNLFKANATNRLVIENRFAFEDTVSRLAGAGRLDFIEDLLEHQKTLPQGRREGFIVRIIMLYGKAGMTKQALDTFFNMDLYGCKRSVKSFNAALQVLSFNPDLHTIWEFLHDAPSKYGIDIDAVSFNIAIKSFCELGILDGAYMAMREMEKSGLTPDVVTYTTLISALYKHERCVIGNGLWNLMVLKGCKPNLTTFNVRIQFLVNRRRAWDANDLLLLMPKLQVEPDSITYNMVIKGFFLARFPDMAERVYTAMHGKGYKPNLKIYQTMIHYLCKAGNFDLAYTMCKDCMRKKWYPNLDTVEMLLKGLVKKGQLDQAKSIMELVHRRVPPFRSKQLLSLKSIL</sequence>
<feature type="transit peptide" description="Mitochondrion" evidence="1">
    <location>
        <begin position="1"/>
        <end position="81"/>
    </location>
</feature>
<feature type="chain" id="PRO_0000342875" description="Pentatricopeptide repeat-containing protein At1g80150, mitochondrial">
    <location>
        <begin position="82"/>
        <end position="397"/>
    </location>
</feature>
<feature type="repeat" description="PPR 1">
    <location>
        <begin position="105"/>
        <end position="139"/>
    </location>
</feature>
<feature type="repeat" description="PPR 2">
    <location>
        <begin position="140"/>
        <end position="170"/>
    </location>
</feature>
<feature type="repeat" description="PPR 3">
    <location>
        <begin position="176"/>
        <end position="210"/>
    </location>
</feature>
<feature type="repeat" description="PPR 4">
    <location>
        <begin position="211"/>
        <end position="245"/>
    </location>
</feature>
<feature type="repeat" description="PPR 5">
    <location>
        <begin position="246"/>
        <end position="280"/>
    </location>
</feature>
<feature type="repeat" description="PPR 6">
    <location>
        <begin position="281"/>
        <end position="315"/>
    </location>
</feature>
<feature type="repeat" description="PPR 7">
    <location>
        <begin position="316"/>
        <end position="350"/>
    </location>
</feature>
<feature type="repeat" description="PPR 8">
    <location>
        <begin position="351"/>
        <end position="381"/>
    </location>
</feature>
<feature type="sequence conflict" description="In Ref. 3; BAC43646 and 4; AAO63417." evidence="2" ref="3 4">
    <original>I</original>
    <variation>M</variation>
    <location>
        <position position="109"/>
    </location>
</feature>
<feature type="sequence conflict" description="In Ref. 3; BAC43646 and 4; AAO63417." evidence="2" ref="3 4">
    <original>M</original>
    <variation>I</variation>
    <location>
        <position position="238"/>
    </location>
</feature>
<comment type="subcellular location">
    <subcellularLocation>
        <location evidence="2">Mitochondrion</location>
    </subcellularLocation>
</comment>
<comment type="similarity">
    <text evidence="2">Belongs to the PPR family. P subfamily.</text>
</comment>
<comment type="sequence caution" evidence="2">
    <conflict type="erroneous gene model prediction">
        <sequence resource="EMBL-CDS" id="AAD55488"/>
    </conflict>
</comment>
<comment type="online information" name="Pentatricopeptide repeat proteins">
    <link uri="https://ppr.plantenergy.uwa.edu.au"/>
</comment>
<evidence type="ECO:0000255" key="1"/>
<evidence type="ECO:0000305" key="2"/>